<name>AROB_CAMC1</name>
<comment type="function">
    <text evidence="1">Catalyzes the conversion of 3-deoxy-D-arabino-heptulosonate 7-phosphate (DAHP) to dehydroquinate (DHQ).</text>
</comment>
<comment type="catalytic activity">
    <reaction evidence="1">
        <text>7-phospho-2-dehydro-3-deoxy-D-arabino-heptonate = 3-dehydroquinate + phosphate</text>
        <dbReference type="Rhea" id="RHEA:21968"/>
        <dbReference type="ChEBI" id="CHEBI:32364"/>
        <dbReference type="ChEBI" id="CHEBI:43474"/>
        <dbReference type="ChEBI" id="CHEBI:58394"/>
        <dbReference type="EC" id="4.2.3.4"/>
    </reaction>
</comment>
<comment type="cofactor">
    <cofactor evidence="1">
        <name>Co(2+)</name>
        <dbReference type="ChEBI" id="CHEBI:48828"/>
    </cofactor>
    <cofactor evidence="1">
        <name>Zn(2+)</name>
        <dbReference type="ChEBI" id="CHEBI:29105"/>
    </cofactor>
    <text evidence="1">Binds 1 divalent metal cation per subunit. Can use either Co(2+) or Zn(2+).</text>
</comment>
<comment type="cofactor">
    <cofactor evidence="1">
        <name>NAD(+)</name>
        <dbReference type="ChEBI" id="CHEBI:57540"/>
    </cofactor>
</comment>
<comment type="pathway">
    <text evidence="1">Metabolic intermediate biosynthesis; chorismate biosynthesis; chorismate from D-erythrose 4-phosphate and phosphoenolpyruvate: step 2/7.</text>
</comment>
<comment type="subcellular location">
    <subcellularLocation>
        <location evidence="1">Cytoplasm</location>
    </subcellularLocation>
</comment>
<comment type="similarity">
    <text evidence="1">Belongs to the sugar phosphate cyclases superfamily. Dehydroquinate synthase family.</text>
</comment>
<dbReference type="EC" id="4.2.3.4" evidence="1"/>
<dbReference type="EMBL" id="CP000792">
    <property type="protein sequence ID" value="EAT97321.1"/>
    <property type="molecule type" value="Genomic_DNA"/>
</dbReference>
<dbReference type="RefSeq" id="WP_012001691.1">
    <property type="nucleotide sequence ID" value="NC_009802.2"/>
</dbReference>
<dbReference type="SMR" id="A7ZD95"/>
<dbReference type="STRING" id="360104.CCC13826_0087"/>
<dbReference type="KEGG" id="cco:CCC13826_0087"/>
<dbReference type="eggNOG" id="COG0337">
    <property type="taxonomic scope" value="Bacteria"/>
</dbReference>
<dbReference type="HOGENOM" id="CLU_001201_0_1_7"/>
<dbReference type="OrthoDB" id="9806583at2"/>
<dbReference type="UniPathway" id="UPA00053">
    <property type="reaction ID" value="UER00085"/>
</dbReference>
<dbReference type="Proteomes" id="UP000001121">
    <property type="component" value="Chromosome"/>
</dbReference>
<dbReference type="GO" id="GO:0005737">
    <property type="term" value="C:cytoplasm"/>
    <property type="evidence" value="ECO:0007669"/>
    <property type="project" value="UniProtKB-SubCell"/>
</dbReference>
<dbReference type="GO" id="GO:0003856">
    <property type="term" value="F:3-dehydroquinate synthase activity"/>
    <property type="evidence" value="ECO:0007669"/>
    <property type="project" value="UniProtKB-UniRule"/>
</dbReference>
<dbReference type="GO" id="GO:0046872">
    <property type="term" value="F:metal ion binding"/>
    <property type="evidence" value="ECO:0007669"/>
    <property type="project" value="UniProtKB-KW"/>
</dbReference>
<dbReference type="GO" id="GO:0000166">
    <property type="term" value="F:nucleotide binding"/>
    <property type="evidence" value="ECO:0007669"/>
    <property type="project" value="UniProtKB-KW"/>
</dbReference>
<dbReference type="GO" id="GO:0008652">
    <property type="term" value="P:amino acid biosynthetic process"/>
    <property type="evidence" value="ECO:0007669"/>
    <property type="project" value="UniProtKB-KW"/>
</dbReference>
<dbReference type="GO" id="GO:0009073">
    <property type="term" value="P:aromatic amino acid family biosynthetic process"/>
    <property type="evidence" value="ECO:0007669"/>
    <property type="project" value="UniProtKB-KW"/>
</dbReference>
<dbReference type="GO" id="GO:0009423">
    <property type="term" value="P:chorismate biosynthetic process"/>
    <property type="evidence" value="ECO:0007669"/>
    <property type="project" value="UniProtKB-UniRule"/>
</dbReference>
<dbReference type="CDD" id="cd08195">
    <property type="entry name" value="DHQS"/>
    <property type="match status" value="1"/>
</dbReference>
<dbReference type="FunFam" id="3.40.50.1970:FF:000007">
    <property type="entry name" value="Pentafunctional AROM polypeptide"/>
    <property type="match status" value="1"/>
</dbReference>
<dbReference type="Gene3D" id="3.40.50.1970">
    <property type="match status" value="1"/>
</dbReference>
<dbReference type="Gene3D" id="1.20.1090.10">
    <property type="entry name" value="Dehydroquinate synthase-like - alpha domain"/>
    <property type="match status" value="1"/>
</dbReference>
<dbReference type="HAMAP" id="MF_00110">
    <property type="entry name" value="DHQ_synthase"/>
    <property type="match status" value="1"/>
</dbReference>
<dbReference type="InterPro" id="IPR050071">
    <property type="entry name" value="Dehydroquinate_synthase"/>
</dbReference>
<dbReference type="InterPro" id="IPR016037">
    <property type="entry name" value="DHQ_synth_AroB"/>
</dbReference>
<dbReference type="InterPro" id="IPR030963">
    <property type="entry name" value="DHQ_synth_fam"/>
</dbReference>
<dbReference type="InterPro" id="IPR030960">
    <property type="entry name" value="DHQS/DOIS_N"/>
</dbReference>
<dbReference type="InterPro" id="IPR056179">
    <property type="entry name" value="DHQS_C"/>
</dbReference>
<dbReference type="NCBIfam" id="TIGR01357">
    <property type="entry name" value="aroB"/>
    <property type="match status" value="1"/>
</dbReference>
<dbReference type="PANTHER" id="PTHR43622">
    <property type="entry name" value="3-DEHYDROQUINATE SYNTHASE"/>
    <property type="match status" value="1"/>
</dbReference>
<dbReference type="PANTHER" id="PTHR43622:SF7">
    <property type="entry name" value="3-DEHYDROQUINATE SYNTHASE, CHLOROPLASTIC"/>
    <property type="match status" value="1"/>
</dbReference>
<dbReference type="Pfam" id="PF01761">
    <property type="entry name" value="DHQ_synthase"/>
    <property type="match status" value="1"/>
</dbReference>
<dbReference type="Pfam" id="PF24621">
    <property type="entry name" value="DHQS_C"/>
    <property type="match status" value="1"/>
</dbReference>
<dbReference type="PIRSF" id="PIRSF001455">
    <property type="entry name" value="DHQ_synth"/>
    <property type="match status" value="1"/>
</dbReference>
<dbReference type="SUPFAM" id="SSF56796">
    <property type="entry name" value="Dehydroquinate synthase-like"/>
    <property type="match status" value="1"/>
</dbReference>
<organism>
    <name type="scientific">Campylobacter concisus (strain 13826)</name>
    <dbReference type="NCBI Taxonomy" id="360104"/>
    <lineage>
        <taxon>Bacteria</taxon>
        <taxon>Pseudomonadati</taxon>
        <taxon>Campylobacterota</taxon>
        <taxon>Epsilonproteobacteria</taxon>
        <taxon>Campylobacterales</taxon>
        <taxon>Campylobacteraceae</taxon>
        <taxon>Campylobacter</taxon>
    </lineage>
</organism>
<keyword id="KW-0028">Amino-acid biosynthesis</keyword>
<keyword id="KW-0057">Aromatic amino acid biosynthesis</keyword>
<keyword id="KW-0170">Cobalt</keyword>
<keyword id="KW-0963">Cytoplasm</keyword>
<keyword id="KW-0456">Lyase</keyword>
<keyword id="KW-0479">Metal-binding</keyword>
<keyword id="KW-0520">NAD</keyword>
<keyword id="KW-0547">Nucleotide-binding</keyword>
<keyword id="KW-0862">Zinc</keyword>
<gene>
    <name evidence="1" type="primary">aroB</name>
    <name type="ordered locus">Ccon26_08850</name>
    <name type="ORF">CCC13826_0087</name>
</gene>
<protein>
    <recommendedName>
        <fullName evidence="1">3-dehydroquinate synthase</fullName>
        <shortName evidence="1">DHQS</shortName>
        <ecNumber evidence="1">4.2.3.4</ecNumber>
    </recommendedName>
</protein>
<reference key="1">
    <citation type="submission" date="2007-10" db="EMBL/GenBank/DDBJ databases">
        <title>Genome sequence of Campylobacter concisus 13826 isolated from human feces.</title>
        <authorList>
            <person name="Fouts D.E."/>
            <person name="Mongodin E.F."/>
            <person name="Puiu D."/>
            <person name="Sebastian Y."/>
            <person name="Miller W.G."/>
            <person name="Mandrell R.E."/>
            <person name="On S."/>
            <person name="Nelson K.E."/>
        </authorList>
    </citation>
    <scope>NUCLEOTIDE SEQUENCE [LARGE SCALE GENOMIC DNA]</scope>
    <source>
        <strain>13826</strain>
    </source>
</reference>
<feature type="chain" id="PRO_1000117475" description="3-dehydroquinate synthase">
    <location>
        <begin position="1"/>
        <end position="345"/>
    </location>
</feature>
<feature type="binding site" evidence="1">
    <location>
        <begin position="62"/>
        <end position="67"/>
    </location>
    <ligand>
        <name>NAD(+)</name>
        <dbReference type="ChEBI" id="CHEBI:57540"/>
    </ligand>
</feature>
<feature type="binding site" evidence="1">
    <location>
        <begin position="96"/>
        <end position="100"/>
    </location>
    <ligand>
        <name>NAD(+)</name>
        <dbReference type="ChEBI" id="CHEBI:57540"/>
    </ligand>
</feature>
<feature type="binding site" evidence="1">
    <location>
        <begin position="120"/>
        <end position="121"/>
    </location>
    <ligand>
        <name>NAD(+)</name>
        <dbReference type="ChEBI" id="CHEBI:57540"/>
    </ligand>
</feature>
<feature type="binding site" evidence="1">
    <location>
        <position position="133"/>
    </location>
    <ligand>
        <name>NAD(+)</name>
        <dbReference type="ChEBI" id="CHEBI:57540"/>
    </ligand>
</feature>
<feature type="binding site" evidence="1">
    <location>
        <position position="142"/>
    </location>
    <ligand>
        <name>NAD(+)</name>
        <dbReference type="ChEBI" id="CHEBI:57540"/>
    </ligand>
</feature>
<feature type="binding site" evidence="1">
    <location>
        <begin position="160"/>
        <end position="163"/>
    </location>
    <ligand>
        <name>NAD(+)</name>
        <dbReference type="ChEBI" id="CHEBI:57540"/>
    </ligand>
</feature>
<feature type="binding site" evidence="1">
    <location>
        <position position="175"/>
    </location>
    <ligand>
        <name>Zn(2+)</name>
        <dbReference type="ChEBI" id="CHEBI:29105"/>
    </ligand>
</feature>
<feature type="binding site" evidence="1">
    <location>
        <position position="233"/>
    </location>
    <ligand>
        <name>Zn(2+)</name>
        <dbReference type="ChEBI" id="CHEBI:29105"/>
    </ligand>
</feature>
<feature type="binding site" evidence="1">
    <location>
        <position position="250"/>
    </location>
    <ligand>
        <name>Zn(2+)</name>
        <dbReference type="ChEBI" id="CHEBI:29105"/>
    </ligand>
</feature>
<accession>A7ZD95</accession>
<proteinExistence type="inferred from homology"/>
<sequence length="345" mass="38751">MQINLNLKEKASSYKIYINELERLELKGKVGIVTNAKVAGLHLEKLLSVLKCDEKFIISVPDGEEYKNLTTIEQILEQLFVSKFDRSSTLIALGGGVISDMTGFAASIYERGISFINIPTTLLAQVDASVGGKTGVNNKFGKNLIGSFYQPKAVFCEINFLKTLPKREFAAGMAEALKMAITFDKEMFSWLKSVNLDDENLAKLVEKSINLKARVVEQDEKEKGLRAILNYGHTFAHVIENETNYKEFLHGEAVAIGMNMANRLSVRLGLMSEAQAEEIKQVLVKFDLPVSYKIENEYAFYEAFFMDKKTKGDKINFIIADKIGSAVIKNDVKKEDVLETLREFK</sequence>
<evidence type="ECO:0000255" key="1">
    <source>
        <dbReference type="HAMAP-Rule" id="MF_00110"/>
    </source>
</evidence>